<feature type="chain" id="PRO_0000153729" description="Interferon-induced transmembrane protein 3">
    <location>
        <begin position="1"/>
        <end position="133"/>
    </location>
</feature>
<feature type="topological domain" description="Cytoplasmic" evidence="2">
    <location>
        <begin position="1"/>
        <end position="57"/>
    </location>
</feature>
<feature type="intramembrane region" description="Helical" evidence="2">
    <location>
        <begin position="58"/>
        <end position="78"/>
    </location>
</feature>
<feature type="topological domain" description="Cytoplasmic" evidence="2">
    <location>
        <begin position="79"/>
        <end position="107"/>
    </location>
</feature>
<feature type="transmembrane region" description="Helical" evidence="2">
    <location>
        <begin position="108"/>
        <end position="128"/>
    </location>
</feature>
<feature type="topological domain" description="Extracellular" evidence="2">
    <location>
        <begin position="129"/>
        <end position="133"/>
    </location>
</feature>
<feature type="region of interest" description="Interaction with SPP1" evidence="4">
    <location>
        <begin position="60"/>
        <end position="93"/>
    </location>
</feature>
<feature type="region of interest" description="Interaction with VAPA" evidence="15">
    <location>
        <begin position="108"/>
        <end position="133"/>
    </location>
</feature>
<feature type="modified residue" description="Phosphotyrosine" evidence="16">
    <location>
        <position position="20"/>
    </location>
</feature>
<feature type="lipid moiety-binding region" description="S-palmitoyl cysteine" evidence="7">
    <location>
        <position position="71"/>
    </location>
</feature>
<feature type="lipid moiety-binding region" description="S-palmitoyl cysteine" evidence="7">
    <location>
        <position position="72"/>
    </location>
</feature>
<feature type="lipid moiety-binding region" description="S-palmitoyl cysteine" evidence="7">
    <location>
        <position position="105"/>
    </location>
</feature>
<feature type="cross-link" description="Glycyl lysine isopeptide (Lys-Gly) (interchain with G-Cter in ubiquitin)" evidence="14">
    <location>
        <position position="24"/>
    </location>
</feature>
<feature type="cross-link" description="Glycyl lysine isopeptide (Lys-Gly) (interchain with G-Cter in ubiquitin)" evidence="14">
    <location>
        <position position="83"/>
    </location>
</feature>
<feature type="cross-link" description="Glycyl lysine isopeptide (Lys-Gly) (interchain with G-Cter in ubiquitin)" evidence="14">
    <location>
        <position position="88"/>
    </location>
</feature>
<feature type="cross-link" description="Glycyl lysine isopeptide (Lys-Gly) (interchain with G-Cter in ubiquitin)" evidence="14">
    <location>
        <position position="104"/>
    </location>
</feature>
<feature type="sequence variant" id="VAR_053810" description="In dbSNP:rs1136853." evidence="3">
    <original>H</original>
    <variation>Q</variation>
    <location>
        <position position="3"/>
    </location>
</feature>
<feature type="mutagenesis site" description="Loss of phosphorylation. Accumulates at the plasma membrane. Increases anti-HCV properties. Loss of anti-SARS-CoV-2 activity by enhancing Spike-mediated cell-to-cell fusion." evidence="16 19">
    <original>Y</original>
    <variation>A</variation>
    <location>
        <position position="20"/>
    </location>
</feature>
<feature type="mutagenesis site" description="Accumulates at the plasma membrane. Loss of anti-SARS-CoV-2 activity by enhancing Spike-mediated cell-to-cell fusion." evidence="19">
    <original>L</original>
    <variation>Q</variation>
    <location>
        <position position="23"/>
    </location>
</feature>
<feature type="mutagenesis site" description="Slightly enhances infection by SARS-CoV-2." evidence="19">
    <location>
        <begin position="59"/>
        <end position="68"/>
    </location>
</feature>
<feature type="mutagenesis site" description="Decreases anti-SARS-CoV-2 activity." evidence="19">
    <original>SLFNT</original>
    <variation>ALFAA</variation>
    <location>
        <begin position="61"/>
        <end position="65"/>
    </location>
</feature>
<feature type="mutagenesis site" description="Loss of anti-HCV activity. Only localizes at the lysosome. No effect on SARS-CoV-2 infection; when associated with A-105. Loss of anti-influenza A virus activity; when associated with A-105." evidence="16 19">
    <original>CC</original>
    <variation>AA</variation>
    <location>
        <begin position="71"/>
        <end position="72"/>
    </location>
</feature>
<feature type="mutagenesis site" description="Loss of anti-HCV activity. Only localizes at the lysosome. No effect on SARS-CoV-2 infection; when associated with 71-A-A-72. Loss of anti-influenza A virus activity; when associated with 71-A-A-72." evidence="16 19">
    <original>C</original>
    <variation>A</variation>
    <location>
        <position position="105"/>
    </location>
</feature>
<feature type="sequence conflict" description="In Ref. 1; CAA40626." evidence="20" ref="1">
    <original>N</original>
    <variation>S</variation>
    <location>
        <position position="2"/>
    </location>
</feature>
<feature type="sequence conflict" description="In Ref. 1; CAA40626." evidence="20" ref="1">
    <original>A</original>
    <variation>G</variation>
    <location>
        <position position="34"/>
    </location>
</feature>
<name>IFM3_HUMAN</name>
<sequence>MNHTVQTFFSPVNSGQPPNYEMLKEEHEVAVLGAPHNPAPPTSTVIHIRSETSVPDHVVWSLFNTLFMNPCCLGFIAFAYSVKSRDRKMVGDVTGAQAYASTAKCLNIWALILGILMTILLIVIPVLIFQAYG</sequence>
<gene>
    <name evidence="21" type="primary">IFITM3</name>
</gene>
<protein>
    <recommendedName>
        <fullName evidence="20">Interferon-induced transmembrane protein 3</fullName>
    </recommendedName>
    <alternativeName>
        <fullName>Dispanin subfamily A member 2b</fullName>
        <shortName>DSPA2b</shortName>
    </alternativeName>
    <alternativeName>
        <fullName>Interferon-inducible protein 1-8U</fullName>
    </alternativeName>
</protein>
<proteinExistence type="evidence at protein level"/>
<reference key="1">
    <citation type="journal article" date="1991" name="Eur. J. Biochem.">
        <title>Molecular analysis of a human interferon-inducible gene family.</title>
        <authorList>
            <person name="Lewin A.R."/>
            <person name="Reid L.E."/>
            <person name="McMahon M."/>
            <person name="Stark G.R."/>
            <person name="Kerr I.M."/>
        </authorList>
    </citation>
    <scope>NUCLEOTIDE SEQUENCE [MRNA]</scope>
</reference>
<reference key="2">
    <citation type="journal article" date="2012" name="Nature">
        <title>IFITM3 restricts the morbidity and mortality associated with influenza.</title>
        <authorList>
            <person name="Everitt A.R."/>
            <person name="Clare S."/>
            <person name="Pertel T."/>
            <person name="John S.P."/>
            <person name="Wash R.S."/>
            <person name="Smith S.E."/>
            <person name="Chin C.R."/>
            <person name="Feeley E.M."/>
            <person name="Sims J.S."/>
            <person name="Adams D.J."/>
            <person name="Wise H.M."/>
            <person name="Kane L."/>
            <person name="Goulding D."/>
            <person name="Digard P."/>
            <person name="Anttila V."/>
            <person name="Baillie J.K."/>
            <person name="Walsh T.S."/>
            <person name="Hume D.A."/>
            <person name="Palotie A."/>
            <person name="Xue Y."/>
            <person name="Colonna V."/>
            <person name="Tyler-Smith C."/>
            <person name="Dunning J."/>
            <person name="Gordon S.B."/>
            <person name="Smyth R.L."/>
            <person name="Openshaw P.J."/>
            <person name="Dougan G."/>
            <person name="Brass A.L."/>
            <person name="Kellam P."/>
        </authorList>
    </citation>
    <scope>NUCLEOTIDE SEQUENCE [GENOMIC DNA]</scope>
    <scope>INVOLVEMENT IN SUSCEPTIBILITY TO SEVERE INFLUENZA INFECTION</scope>
</reference>
<reference key="3">
    <citation type="submission" date="2003-05" db="EMBL/GenBank/DDBJ databases">
        <title>Cloning of human full-length CDSs in BD Creator(TM) system donor vector.</title>
        <authorList>
            <person name="Kalnine N."/>
            <person name="Chen X."/>
            <person name="Rolfs A."/>
            <person name="Halleck A."/>
            <person name="Hines L."/>
            <person name="Eisenstein S."/>
            <person name="Koundinya M."/>
            <person name="Raphael J."/>
            <person name="Moreira D."/>
            <person name="Kelley T."/>
            <person name="LaBaer J."/>
            <person name="Lin Y."/>
            <person name="Phelan M."/>
            <person name="Farmer A."/>
        </authorList>
    </citation>
    <scope>NUCLEOTIDE SEQUENCE [LARGE SCALE MRNA]</scope>
</reference>
<reference key="4">
    <citation type="journal article" date="2004" name="Nat. Genet.">
        <title>Complete sequencing and characterization of 21,243 full-length human cDNAs.</title>
        <authorList>
            <person name="Ota T."/>
            <person name="Suzuki Y."/>
            <person name="Nishikawa T."/>
            <person name="Otsuki T."/>
            <person name="Sugiyama T."/>
            <person name="Irie R."/>
            <person name="Wakamatsu A."/>
            <person name="Hayashi K."/>
            <person name="Sato H."/>
            <person name="Nagai K."/>
            <person name="Kimura K."/>
            <person name="Makita H."/>
            <person name="Sekine M."/>
            <person name="Obayashi M."/>
            <person name="Nishi T."/>
            <person name="Shibahara T."/>
            <person name="Tanaka T."/>
            <person name="Ishii S."/>
            <person name="Yamamoto J."/>
            <person name="Saito K."/>
            <person name="Kawai Y."/>
            <person name="Isono Y."/>
            <person name="Nakamura Y."/>
            <person name="Nagahari K."/>
            <person name="Murakami K."/>
            <person name="Yasuda T."/>
            <person name="Iwayanagi T."/>
            <person name="Wagatsuma M."/>
            <person name="Shiratori A."/>
            <person name="Sudo H."/>
            <person name="Hosoiri T."/>
            <person name="Kaku Y."/>
            <person name="Kodaira H."/>
            <person name="Kondo H."/>
            <person name="Sugawara M."/>
            <person name="Takahashi M."/>
            <person name="Kanda K."/>
            <person name="Yokoi T."/>
            <person name="Furuya T."/>
            <person name="Kikkawa E."/>
            <person name="Omura Y."/>
            <person name="Abe K."/>
            <person name="Kamihara K."/>
            <person name="Katsuta N."/>
            <person name="Sato K."/>
            <person name="Tanikawa M."/>
            <person name="Yamazaki M."/>
            <person name="Ninomiya K."/>
            <person name="Ishibashi T."/>
            <person name="Yamashita H."/>
            <person name="Murakawa K."/>
            <person name="Fujimori K."/>
            <person name="Tanai H."/>
            <person name="Kimata M."/>
            <person name="Watanabe M."/>
            <person name="Hiraoka S."/>
            <person name="Chiba Y."/>
            <person name="Ishida S."/>
            <person name="Ono Y."/>
            <person name="Takiguchi S."/>
            <person name="Watanabe S."/>
            <person name="Yosida M."/>
            <person name="Hotuta T."/>
            <person name="Kusano J."/>
            <person name="Kanehori K."/>
            <person name="Takahashi-Fujii A."/>
            <person name="Hara H."/>
            <person name="Tanase T.-O."/>
            <person name="Nomura Y."/>
            <person name="Togiya S."/>
            <person name="Komai F."/>
            <person name="Hara R."/>
            <person name="Takeuchi K."/>
            <person name="Arita M."/>
            <person name="Imose N."/>
            <person name="Musashino K."/>
            <person name="Yuuki H."/>
            <person name="Oshima A."/>
            <person name="Sasaki N."/>
            <person name="Aotsuka S."/>
            <person name="Yoshikawa Y."/>
            <person name="Matsunawa H."/>
            <person name="Ichihara T."/>
            <person name="Shiohata N."/>
            <person name="Sano S."/>
            <person name="Moriya S."/>
            <person name="Momiyama H."/>
            <person name="Satoh N."/>
            <person name="Takami S."/>
            <person name="Terashima Y."/>
            <person name="Suzuki O."/>
            <person name="Nakagawa S."/>
            <person name="Senoh A."/>
            <person name="Mizoguchi H."/>
            <person name="Goto Y."/>
            <person name="Shimizu F."/>
            <person name="Wakebe H."/>
            <person name="Hishigaki H."/>
            <person name="Watanabe T."/>
            <person name="Sugiyama A."/>
            <person name="Takemoto M."/>
            <person name="Kawakami B."/>
            <person name="Yamazaki M."/>
            <person name="Watanabe K."/>
            <person name="Kumagai A."/>
            <person name="Itakura S."/>
            <person name="Fukuzumi Y."/>
            <person name="Fujimori Y."/>
            <person name="Komiyama M."/>
            <person name="Tashiro H."/>
            <person name="Tanigami A."/>
            <person name="Fujiwara T."/>
            <person name="Ono T."/>
            <person name="Yamada K."/>
            <person name="Fujii Y."/>
            <person name="Ozaki K."/>
            <person name="Hirao M."/>
            <person name="Ohmori Y."/>
            <person name="Kawabata A."/>
            <person name="Hikiji T."/>
            <person name="Kobatake N."/>
            <person name="Inagaki H."/>
            <person name="Ikema Y."/>
            <person name="Okamoto S."/>
            <person name="Okitani R."/>
            <person name="Kawakami T."/>
            <person name="Noguchi S."/>
            <person name="Itoh T."/>
            <person name="Shigeta K."/>
            <person name="Senba T."/>
            <person name="Matsumura K."/>
            <person name="Nakajima Y."/>
            <person name="Mizuno T."/>
            <person name="Morinaga M."/>
            <person name="Sasaki M."/>
            <person name="Togashi T."/>
            <person name="Oyama M."/>
            <person name="Hata H."/>
            <person name="Watanabe M."/>
            <person name="Komatsu T."/>
            <person name="Mizushima-Sugano J."/>
            <person name="Satoh T."/>
            <person name="Shirai Y."/>
            <person name="Takahashi Y."/>
            <person name="Nakagawa K."/>
            <person name="Okumura K."/>
            <person name="Nagase T."/>
            <person name="Nomura N."/>
            <person name="Kikuchi H."/>
            <person name="Masuho Y."/>
            <person name="Yamashita R."/>
            <person name="Nakai K."/>
            <person name="Yada T."/>
            <person name="Nakamura Y."/>
            <person name="Ohara O."/>
            <person name="Isogai T."/>
            <person name="Sugano S."/>
        </authorList>
    </citation>
    <scope>NUCLEOTIDE SEQUENCE [LARGE SCALE MRNA]</scope>
</reference>
<reference key="5">
    <citation type="journal article" date="2006" name="Nature">
        <title>Human chromosome 11 DNA sequence and analysis including novel gene identification.</title>
        <authorList>
            <person name="Taylor T.D."/>
            <person name="Noguchi H."/>
            <person name="Totoki Y."/>
            <person name="Toyoda A."/>
            <person name="Kuroki Y."/>
            <person name="Dewar K."/>
            <person name="Lloyd C."/>
            <person name="Itoh T."/>
            <person name="Takeda T."/>
            <person name="Kim D.-W."/>
            <person name="She X."/>
            <person name="Barlow K.F."/>
            <person name="Bloom T."/>
            <person name="Bruford E."/>
            <person name="Chang J.L."/>
            <person name="Cuomo C.A."/>
            <person name="Eichler E."/>
            <person name="FitzGerald M.G."/>
            <person name="Jaffe D.B."/>
            <person name="LaButti K."/>
            <person name="Nicol R."/>
            <person name="Park H.-S."/>
            <person name="Seaman C."/>
            <person name="Sougnez C."/>
            <person name="Yang X."/>
            <person name="Zimmer A.R."/>
            <person name="Zody M.C."/>
            <person name="Birren B.W."/>
            <person name="Nusbaum C."/>
            <person name="Fujiyama A."/>
            <person name="Hattori M."/>
            <person name="Rogers J."/>
            <person name="Lander E.S."/>
            <person name="Sakaki Y."/>
        </authorList>
    </citation>
    <scope>NUCLEOTIDE SEQUENCE [LARGE SCALE GENOMIC DNA]</scope>
</reference>
<reference key="6">
    <citation type="submission" date="2005-07" db="EMBL/GenBank/DDBJ databases">
        <authorList>
            <person name="Mural R.J."/>
            <person name="Istrail S."/>
            <person name="Sutton G."/>
            <person name="Florea L."/>
            <person name="Halpern A.L."/>
            <person name="Mobarry C.M."/>
            <person name="Lippert R."/>
            <person name="Walenz B."/>
            <person name="Shatkay H."/>
            <person name="Dew I."/>
            <person name="Miller J.R."/>
            <person name="Flanigan M.J."/>
            <person name="Edwards N.J."/>
            <person name="Bolanos R."/>
            <person name="Fasulo D."/>
            <person name="Halldorsson B.V."/>
            <person name="Hannenhalli S."/>
            <person name="Turner R."/>
            <person name="Yooseph S."/>
            <person name="Lu F."/>
            <person name="Nusskern D.R."/>
            <person name="Shue B.C."/>
            <person name="Zheng X.H."/>
            <person name="Zhong F."/>
            <person name="Delcher A.L."/>
            <person name="Huson D.H."/>
            <person name="Kravitz S.A."/>
            <person name="Mouchard L."/>
            <person name="Reinert K."/>
            <person name="Remington K.A."/>
            <person name="Clark A.G."/>
            <person name="Waterman M.S."/>
            <person name="Eichler E.E."/>
            <person name="Adams M.D."/>
            <person name="Hunkapiller M.W."/>
            <person name="Myers E.W."/>
            <person name="Venter J.C."/>
        </authorList>
    </citation>
    <scope>NUCLEOTIDE SEQUENCE [LARGE SCALE GENOMIC DNA]</scope>
</reference>
<reference key="7">
    <citation type="journal article" date="2004" name="Genome Res.">
        <title>The status, quality, and expansion of the NIH full-length cDNA project: the Mammalian Gene Collection (MGC).</title>
        <authorList>
            <consortium name="The MGC Project Team"/>
        </authorList>
    </citation>
    <scope>NUCLEOTIDE SEQUENCE [LARGE SCALE MRNA]</scope>
    <scope>VARIANT GLN-3</scope>
    <source>
        <tissue>Brain</tissue>
        <tissue>Cervix</tissue>
        <tissue>Vascular endothelial cell</tissue>
    </source>
</reference>
<reference key="8">
    <citation type="journal article" date="2009" name="Cell">
        <title>The IFITM proteins mediate cellular resistance to influenza A H1N1 virus, West Nile virus, and dengue virus.</title>
        <authorList>
            <person name="Brass A.L."/>
            <person name="Huang I.C."/>
            <person name="Benita Y."/>
            <person name="John S.P."/>
            <person name="Krishnan M.N."/>
            <person name="Feeley E.M."/>
            <person name="Ryan B.J."/>
            <person name="Weyer J.L."/>
            <person name="van der Weyden L."/>
            <person name="Fikrig E."/>
            <person name="Adams D.J."/>
            <person name="Xavier R.J."/>
            <person name="Farzan M."/>
            <person name="Elledge S.J."/>
        </authorList>
    </citation>
    <scope>FUNCTION IN VIRAL RESISTANCE</scope>
</reference>
<reference key="9">
    <citation type="journal article" date="2010" name="J. Virol.">
        <title>Identification of five interferon-induced cellular proteins that inhibit west nile virus and dengue virus infections.</title>
        <authorList>
            <person name="Jiang D."/>
            <person name="Weidner J.M."/>
            <person name="Qing M."/>
            <person name="Pan X.B."/>
            <person name="Guo H."/>
            <person name="Xu C."/>
            <person name="Zhang X."/>
            <person name="Birk A."/>
            <person name="Chang J."/>
            <person name="Shi P.Y."/>
            <person name="Block T.M."/>
            <person name="Guo J.T."/>
        </authorList>
    </citation>
    <scope>FUNCTION</scope>
</reference>
<reference key="10">
    <citation type="journal article" date="2010" name="J. Virol.">
        <title>Interferon-induced cell membrane proteins, IFITM3 and tetherin, inhibit vesicular stomatitis virus infection via distinct mechanisms.</title>
        <authorList>
            <person name="Weidner J.M."/>
            <person name="Jiang D."/>
            <person name="Pan X.B."/>
            <person name="Chang J."/>
            <person name="Block T.M."/>
            <person name="Guo J.T."/>
        </authorList>
    </citation>
    <scope>FUNCTION</scope>
    <scope>SUBCELLULAR LOCATION</scope>
    <scope>INVOLVEMENT IN SUSCEPTIBILITY TO SEVERE INFLUENZA INFECTION</scope>
</reference>
<reference key="11">
    <citation type="journal article" date="2010" name="Oncogene">
        <title>Interferon-induced transmembrane 3 binds osteopontin in vitro: expressed in vivo IFITM3 reduced OPN expression.</title>
        <authorList>
            <person name="El-Tanani M.K."/>
            <person name="Jin D."/>
            <person name="Campbell F.C."/>
            <person name="Johnston P.G."/>
        </authorList>
    </citation>
    <scope>INTERACTION WITH SPP1</scope>
</reference>
<reference key="12">
    <citation type="journal article" date="2010" name="Nat. Chem. Biol.">
        <title>Palmitoylome profiling reveals S-palmitoylation-dependent antiviral activity of IFITM3.</title>
        <authorList>
            <person name="Yount J.S."/>
            <person name="Moltedo B."/>
            <person name="Yang Y.Y."/>
            <person name="Charron G."/>
            <person name="Moran T.M."/>
            <person name="Lopez C.B."/>
            <person name="Hang H.C."/>
        </authorList>
    </citation>
    <scope>PALMITOYLATION AT CYS-71; CYS-72 AND CYS-105</scope>
</reference>
<reference key="13">
    <citation type="journal article" date="2011" name="J. Interferon Cytokine Res.">
        <title>The small interferon-induced transmembrane genes and proteins.</title>
        <authorList>
            <person name="Siegrist F."/>
            <person name="Ebeling M."/>
            <person name="Certa U."/>
        </authorList>
    </citation>
    <scope>REVIEW</scope>
</reference>
<reference key="14">
    <citation type="journal article" date="2011" name="J. Virol.">
        <title>The IFITM proteins inhibit HIV-1 infection.</title>
        <authorList>
            <person name="Lu J."/>
            <person name="Pan Q."/>
            <person name="Rong L."/>
            <person name="He W."/>
            <person name="Liu S.L."/>
            <person name="Liang C."/>
        </authorList>
    </citation>
    <scope>FUNCTION</scope>
</reference>
<reference key="15">
    <citation type="journal article" date="2011" name="J. Virol.">
        <authorList>
            <person name="Lu J."/>
            <person name="Pan Q."/>
            <person name="Rong L."/>
            <person name="He W."/>
            <person name="Liu S.L."/>
            <person name="Liang C."/>
        </authorList>
    </citation>
    <scope>ERRATUM OF PUBMED:21177806</scope>
</reference>
<reference key="16">
    <citation type="journal article" date="2011" name="PLoS Pathog.">
        <title>IFITM3 inhibits influenza A virus infection by preventing cytosolic entry.</title>
        <authorList>
            <person name="Feeley E.M."/>
            <person name="Sims J.S."/>
            <person name="John S.P."/>
            <person name="Chin C.R."/>
            <person name="Pertel T."/>
            <person name="Chen L.M."/>
            <person name="Gaiha G.D."/>
            <person name="Ryan B.J."/>
            <person name="Donis R.O."/>
            <person name="Elledge S.J."/>
            <person name="Brass A.L."/>
        </authorList>
    </citation>
    <scope>FUNCTION</scope>
    <scope>SUBCELLULAR LOCATION</scope>
</reference>
<reference key="17">
    <citation type="journal article" date="2011" name="PLoS Pathog.">
        <title>Distinct patterns of IFITM-mediated restriction of filoviruses, SARS coronavirus, and influenza A virus.</title>
        <authorList>
            <person name="Huang I.C."/>
            <person name="Bailey C.C."/>
            <person name="Weyer J.L."/>
            <person name="Radoshitzky S.R."/>
            <person name="Becker M.M."/>
            <person name="Chiang J.J."/>
            <person name="Brass A.L."/>
            <person name="Ahmed A.A."/>
            <person name="Chi X."/>
            <person name="Dong L."/>
            <person name="Longobardi L.E."/>
            <person name="Boltz D."/>
            <person name="Kuhn J.H."/>
            <person name="Elledge S.J."/>
            <person name="Bavari S."/>
            <person name="Denison M.R."/>
            <person name="Choe H."/>
            <person name="Farzan M."/>
        </authorList>
    </citation>
    <scope>FUNCTION</scope>
</reference>
<reference key="18">
    <citation type="journal article" date="2012" name="J. Biol. Chem.">
        <title>S-palmitoylation and ubiquitination differentially regulate interferon-induced transmembrane protein 3 (IFITM3)-mediated resistance to influenza virus.</title>
        <authorList>
            <person name="Yount J.S."/>
            <person name="Karssemeijer R.A."/>
            <person name="Hang H.C."/>
        </authorList>
    </citation>
    <scope>UBIQUITINATION AT LYS-24; LYS-83; LYS-88 AND LYS-104</scope>
    <scope>PALMITOYLATION</scope>
    <scope>TOPOLOGY</scope>
    <scope>LACK OF GLYCOSYLATION</scope>
    <scope>SUBCELLULAR LOCATION</scope>
</reference>
<reference key="19">
    <citation type="journal article" date="2012" name="PLoS ONE">
        <title>IFITM proteins restrict antibody-dependent enhancement of dengue virus infection.</title>
        <authorList>
            <person name="Chan Y.K."/>
            <person name="Huang I.C."/>
            <person name="Farzan M."/>
        </authorList>
    </citation>
    <scope>FUNCTION</scope>
</reference>
<reference key="20">
    <citation type="journal article" date="2012" name="PLoS ONE">
        <title>The dispanins: a novel gene family of ancient origin that contains 14 human members.</title>
        <authorList>
            <person name="Sallman Almen M."/>
            <person name="Bringeland N."/>
            <person name="Fredriksson R."/>
            <person name="Schioth H.B."/>
        </authorList>
    </citation>
    <scope>GENE FAMILY</scope>
</reference>
<reference key="21">
    <citation type="journal article" date="2013" name="Cell Host Microbe">
        <title>The antiviral effector IFITM3 disrupts intracellular cholesterol homeostasis to block viral entry.</title>
        <authorList>
            <person name="Amini-Bavil-Olyaee S."/>
            <person name="Choi Y.J."/>
            <person name="Lee J.H."/>
            <person name="Shi M."/>
            <person name="Huang I.C."/>
            <person name="Farzan M."/>
            <person name="Jung J.U."/>
        </authorList>
    </citation>
    <scope>FUNCTION</scope>
    <scope>INTERACTION WITH VAPA</scope>
</reference>
<reference key="22">
    <citation type="journal article" date="2015" name="J. Biol. Chem.">
        <title>The Interferon-induced Transmembrane Proteins, IFITM1, IFITM2, and IFITM3 Inhibit Hepatitis C Virus Entry.</title>
        <authorList>
            <person name="Narayana S.K."/>
            <person name="Helbig K.J."/>
            <person name="McCartney E.M."/>
            <person name="Eyre N.S."/>
            <person name="Bull R.A."/>
            <person name="Eltahla A."/>
            <person name="Lloyd A.R."/>
            <person name="Beard M.R."/>
        </authorList>
    </citation>
    <scope>FUNCTION</scope>
    <scope>SUBCELLULAR LOCATION</scope>
    <scope>PHOSPHORYLATION AT TYR-20</scope>
    <scope>MUTAGENESIS OF TYR-20; 71-CYS-CYS-72 AND CYS-105</scope>
</reference>
<reference key="23">
    <citation type="journal article" date="2018" name="Turk. J. Biol.">
        <title>Identification of IFITM3 and MGAT1 as novel interaction partners of BRI3 by yeast two-hybrid screening.</title>
        <authorList>
            <person name="Akiva I."/>
            <person name="Birguel Iyison N."/>
        </authorList>
    </citation>
    <scope>INTERACTION WITH BRI3</scope>
    <scope>SUBCELLULAR LOCATION</scope>
</reference>
<reference key="24">
    <citation type="journal article" date="2020" name="Proc. Natl. Acad. Sci. U.S.A.">
        <title>Cholesterol 25-hydroxylase suppresses SARS-CoV-2 replication by blocking membrane fusion.</title>
        <authorList>
            <person name="Zang R."/>
            <person name="Case J.B."/>
            <person name="Yutuc E."/>
            <person name="Ma X."/>
            <person name="Shen S."/>
            <person name="Gomez Castro M.F."/>
            <person name="Liu Z."/>
            <person name="Zeng Q."/>
            <person name="Zhao H."/>
            <person name="Son J."/>
            <person name="Rothlauf P.W."/>
            <person name="Kreutzberger A.J.B."/>
            <person name="Hou G."/>
            <person name="Zhang H."/>
            <person name="Bose S."/>
            <person name="Wang X."/>
            <person name="Vahey M.D."/>
            <person name="Mani K."/>
            <person name="Griffiths W.J."/>
            <person name="Kirchhausen T."/>
            <person name="Fremont D.H."/>
            <person name="Guo H."/>
            <person name="Diwan A."/>
            <person name="Wang Y."/>
            <person name="Diamond M.S."/>
            <person name="Whelan S.P.J."/>
            <person name="Ding S."/>
        </authorList>
    </citation>
    <scope>FUNCTION</scope>
</reference>
<reference key="25">
    <citation type="journal article" date="2021" name="EMBO J.">
        <title>Opposing activities of IFITM proteins in SARS-CoV-2 infection.</title>
        <authorList>
            <person name="Shi G."/>
            <person name="Kenney A.D."/>
            <person name="Kudryashova E."/>
            <person name="Zani A."/>
            <person name="Zhang L."/>
            <person name="Lai K.K."/>
            <person name="Hall-Stoodley L."/>
            <person name="Robinson R.T."/>
            <person name="Kudryashov D.S."/>
            <person name="Compton A.A."/>
            <person name="Yount J.S."/>
        </authorList>
    </citation>
    <scope>FUNCTION</scope>
    <scope>MUTAGENESIS OF TYR-20; LEU-23; 59-VAL--MET-68; 61-SER--THR-65; 71-CYS-CYS-72 AND CYS-105</scope>
    <scope>SUBCELLULAR LOCATION</scope>
</reference>
<comment type="function">
    <text evidence="5 6 8 9 10 11 13 15 16 18 19">IFN-induced antiviral protein which disrupts intracellular cholesterol homeostasis. Inhibits the entry of viruses to the host cell cytoplasm by preventing viral fusion with cholesterol depleted endosomes. May inactivate new enveloped viruses which buds out of the infected cell, by letting them go out with a cholesterol depleted membrane. Active against multiple viruses, including influenza A virus, SARS coronaviruses (SARS-CoV and SARS-CoV-2), Marburg virus (MARV), Ebola virus (EBOV), Dengue virus (DNV), West Nile virus (WNV), human immunodeficiency virus type 1 (HIV-1), hepatitis C virus (HCV) and vesicular stomatitis virus (VSV) (PubMed:26354436, PubMed:33239446, PubMed:33270927). Can inhibit: influenza virus hemagglutinin protein-mediated viral entry, MARV and EBOV GP1,2-mediated viral entry, SARS-CoV and SARS-CoV-2 S protein-mediated viral entry and VSV G protein-mediated viral entry (PubMed:33270927). Plays a critical role in the structural stability and function of vacuolar ATPase (v-ATPase). Establishes physical contact with the v-ATPase of endosomes which is critical for proper clathrin localization and is also required for the function of the v-ATPase to lower the pH in phagocytic endosomes thus establishing an antiviral state. In hepatocytes, IFITM proteins act in a coordinated manner to restrict HCV infection by targeting the endocytosed HCV virion for lysosomal degradation (PubMed:26354436). IFITM2 and IFITM3 display anti-HCV activity that may complement the anti-HCV activity of IFITM1 by inhibiting the late stages of HCV entry, possibly in a coordinated manner by trapping the virion in the endosomal pathway and targeting it for degradation at the lysosome (PubMed:26354436). Exerts opposing activities on SARS-CoV-2, including amphipathicity-dependent restriction of virus at endosomes and amphipathicity-independent enhancement of infection at the plasma membrane (PubMed:33270927).</text>
</comment>
<comment type="subunit">
    <text evidence="1 4 15 17">Interacts with ATP6V0B (By similarity). Interacts with CD81 (By similarity). Interacts with SPP1; the interaction reduces OPN expression (PubMed:19901966). Interacts with VAPA (PubMed:23601107). Interacts with BRI3 (isoforms 1 and 2); the interaction with isoform 2 is weaker than with isoform 1 (PubMed:30983867).</text>
</comment>
<comment type="interaction">
    <interactant intactId="EBI-7932862">
        <id>Q01628</id>
    </interactant>
    <interactant intactId="EBI-348517">
        <id>O95870</id>
        <label>ABHD16A</label>
    </interactant>
    <organismsDiffer>false</organismsDiffer>
    <experiments>3</experiments>
</comment>
<comment type="interaction">
    <interactant intactId="EBI-7932862">
        <id>Q01628</id>
    </interactant>
    <interactant intactId="EBI-13059134">
        <id>Q13520</id>
        <label>AQP6</label>
    </interactant>
    <organismsDiffer>false</organismsDiffer>
    <experiments>3</experiments>
</comment>
<comment type="interaction">
    <interactant intactId="EBI-7932862">
        <id>Q01628</id>
    </interactant>
    <interactant intactId="EBI-2874789">
        <id>O95415</id>
        <label>BRI3</label>
    </interactant>
    <organismsDiffer>false</organismsDiffer>
    <experiments>6</experiments>
</comment>
<comment type="interaction">
    <interactant intactId="EBI-7932862">
        <id>Q01628</id>
    </interactant>
    <interactant intactId="EBI-6657396">
        <id>P19397</id>
        <label>CD53</label>
    </interactant>
    <organismsDiffer>false</organismsDiffer>
    <experiments>3</experiments>
</comment>
<comment type="interaction">
    <interactant intactId="EBI-7932862">
        <id>Q01628</id>
    </interactant>
    <interactant intactId="EBI-17206972">
        <id>Q9NXB9</id>
        <label>ELOVL2</label>
    </interactant>
    <organismsDiffer>false</organismsDiffer>
    <experiments>3</experiments>
</comment>
<comment type="interaction">
    <interactant intactId="EBI-7932862">
        <id>Q01628</id>
    </interactant>
    <interactant intactId="EBI-781551">
        <id>Q9Y282</id>
        <label>ERGIC3</label>
    </interactant>
    <organismsDiffer>false</organismsDiffer>
    <experiments>3</experiments>
</comment>
<comment type="interaction">
    <interactant intactId="EBI-7932862">
        <id>Q01628</id>
    </interactant>
    <interactant intactId="EBI-18938272">
        <id>Q96KR6</id>
        <label>FAM210B</label>
    </interactant>
    <organismsDiffer>false</organismsDiffer>
    <experiments>3</experiments>
</comment>
<comment type="interaction">
    <interactant intactId="EBI-7932862">
        <id>Q01628</id>
    </interactant>
    <interactant intactId="EBI-2833872">
        <id>O15552</id>
        <label>FFAR2</label>
    </interactant>
    <organismsDiffer>false</organismsDiffer>
    <experiments>3</experiments>
</comment>
<comment type="interaction">
    <interactant intactId="EBI-7932862">
        <id>Q01628</id>
    </interactant>
    <interactant intactId="EBI-3918971">
        <id>Q9Y680</id>
        <label>FKBP7</label>
    </interactant>
    <organismsDiffer>false</organismsDiffer>
    <experiments>3</experiments>
</comment>
<comment type="interaction">
    <interactant intactId="EBI-7932862">
        <id>Q01628</id>
    </interactant>
    <interactant intactId="EBI-13067820">
        <id>Q9NZD1</id>
        <label>GPRC5D</label>
    </interactant>
    <organismsDiffer>false</organismsDiffer>
    <experiments>3</experiments>
</comment>
<comment type="interaction">
    <interactant intactId="EBI-7932862">
        <id>Q01628</id>
    </interactant>
    <interactant intactId="EBI-8632435">
        <id>P43628</id>
        <label>KIR2DL3</label>
    </interactant>
    <organismsDiffer>false</organismsDiffer>
    <experiments>3</experiments>
</comment>
<comment type="interaction">
    <interactant intactId="EBI-7932862">
        <id>Q01628</id>
    </interactant>
    <interactant intactId="EBI-17200970">
        <id>Q6UWN5</id>
        <label>LYPD5</label>
    </interactant>
    <organismsDiffer>false</organismsDiffer>
    <experiments>3</experiments>
</comment>
<comment type="interaction">
    <interactant intactId="EBI-7932862">
        <id>Q01628</id>
    </interactant>
    <interactant intactId="EBI-12806656">
        <id>Q96HJ5</id>
        <label>MS4A3</label>
    </interactant>
    <organismsDiffer>false</organismsDiffer>
    <experiments>3</experiments>
</comment>
<comment type="interaction">
    <interactant intactId="EBI-7932862">
        <id>Q01628</id>
    </interactant>
    <interactant intactId="EBI-2829310">
        <id>P43490</id>
        <label>NAMPT</label>
    </interactant>
    <organismsDiffer>false</organismsDiffer>
    <experiments>3</experiments>
</comment>
<comment type="interaction">
    <interactant intactId="EBI-7932862">
        <id>Q01628</id>
    </interactant>
    <interactant intactId="EBI-12807478">
        <id>P35372-10</id>
        <label>OPRM1</label>
    </interactant>
    <organismsDiffer>false</organismsDiffer>
    <experiments>3</experiments>
</comment>
<comment type="interaction">
    <interactant intactId="EBI-7932862">
        <id>Q01628</id>
    </interactant>
    <interactant intactId="EBI-12188331">
        <id>P60201-2</id>
        <label>PLP1</label>
    </interactant>
    <organismsDiffer>false</organismsDiffer>
    <experiments>3</experiments>
</comment>
<comment type="interaction">
    <interactant intactId="EBI-7932862">
        <id>Q01628</id>
    </interactant>
    <interactant intactId="EBI-7545592">
        <id>Q9H6H4</id>
        <label>REEP4</label>
    </interactant>
    <organismsDiffer>false</organismsDiffer>
    <experiments>4</experiments>
</comment>
<comment type="interaction">
    <interactant intactId="EBI-7932862">
        <id>Q01628</id>
    </interactant>
    <interactant intactId="EBI-10192441">
        <id>Q86VR2</id>
        <label>RETREG3</label>
    </interactant>
    <organismsDiffer>false</organismsDiffer>
    <experiments>4</experiments>
</comment>
<comment type="interaction">
    <interactant intactId="EBI-7932862">
        <id>Q01628</id>
    </interactant>
    <interactant intactId="EBI-1046170">
        <id>O95470</id>
        <label>SGPL1</label>
    </interactant>
    <organismsDiffer>false</organismsDiffer>
    <experiments>3</experiments>
</comment>
<comment type="interaction">
    <interactant intactId="EBI-7932862">
        <id>Q01628</id>
    </interactant>
    <interactant intactId="EBI-3923031">
        <id>Q14973</id>
        <label>SLC10A1</label>
    </interactant>
    <organismsDiffer>false</organismsDiffer>
    <experiments>3</experiments>
</comment>
<comment type="interaction">
    <interactant intactId="EBI-7932862">
        <id>Q01628</id>
    </interactant>
    <interactant intactId="EBI-18114847">
        <id>Q12908</id>
        <label>SLC10A2</label>
    </interactant>
    <organismsDiffer>false</organismsDiffer>
    <experiments>3</experiments>
</comment>
<comment type="interaction">
    <interactant intactId="EBI-7932862">
        <id>Q01628</id>
    </interactant>
    <interactant intactId="EBI-3921243">
        <id>O60669</id>
        <label>SLC16A7</label>
    </interactant>
    <organismsDiffer>false</organismsDiffer>
    <experiments>3</experiments>
</comment>
<comment type="interaction">
    <interactant intactId="EBI-7932862">
        <id>Q01628</id>
    </interactant>
    <interactant intactId="EBI-8638294">
        <id>Q9NUH8</id>
        <label>TMEM14B</label>
    </interactant>
    <organismsDiffer>false</organismsDiffer>
    <experiments>3</experiments>
</comment>
<comment type="interaction">
    <interactant intactId="EBI-7932862">
        <id>Q01628</id>
    </interactant>
    <interactant intactId="EBI-2548832">
        <id>Q8N661</id>
        <label>TMEM86B</label>
    </interactant>
    <organismsDiffer>false</organismsDiffer>
    <experiments>3</experiments>
</comment>
<comment type="subcellular location">
    <subcellularLocation>
        <location evidence="8 14 16">Cell membrane</location>
        <topology evidence="8 14">Single-pass type II membrane protein</topology>
    </subcellularLocation>
    <subcellularLocation>
        <location evidence="11">Late endosome membrane</location>
        <topology evidence="20">Single-pass type II membrane protein</topology>
    </subcellularLocation>
    <subcellularLocation>
        <location evidence="16 19">Early endosome membrane</location>
        <topology>Single-pass type II membrane protein</topology>
    </subcellularLocation>
    <subcellularLocation>
        <location evidence="11 16 19">Lysosome membrane</location>
        <topology evidence="20">Single-pass type II membrane protein</topology>
    </subcellularLocation>
    <subcellularLocation>
        <location evidence="17">Cytoplasm</location>
        <location evidence="17">Perinuclear region</location>
    </subcellularLocation>
    <text evidence="17">Co-localizes with BRI3 isoform 1 at the perinuclear region.</text>
</comment>
<comment type="induction">
    <text>By IFN-alpha and IFNG/IFN-gamma.</text>
</comment>
<comment type="PTM">
    <text evidence="7 14 16 19">Palmitoylation on membrane-proximal cysteines controls clustering in membrane compartments and antiviral activity against influenza virus and hepatitis C virus (HCV). Has no effect on anti-SARS-CoV-2 activity.</text>
</comment>
<comment type="PTM">
    <text>Not glycosylated.</text>
</comment>
<comment type="PTM">
    <text evidence="14">Polyubiquitinated with both 'Lys-48' and 'Lys-63' linkages. Ubiquitination negatively regulates antiviral activity. Lys-24 is the most prevalent ubiquitination site.</text>
</comment>
<comment type="PTM">
    <text evidence="16">Phosphorylation at Tyr-20 is required for endosomal and lysosomal location.</text>
</comment>
<comment type="polymorphism">
    <text evidence="8 12">Genetic variations in IFITM3 are responsible for susceptibility to severe influenza virus infection [MIM:614680].</text>
</comment>
<comment type="similarity">
    <text evidence="20">Belongs to the CD225/Dispanin family.</text>
</comment>
<evidence type="ECO:0000250" key="1">
    <source>
        <dbReference type="UniProtKB" id="Q9CQW9"/>
    </source>
</evidence>
<evidence type="ECO:0000255" key="2"/>
<evidence type="ECO:0000269" key="3">
    <source>
    </source>
</evidence>
<evidence type="ECO:0000269" key="4">
    <source>
    </source>
</evidence>
<evidence type="ECO:0000269" key="5">
    <source>
    </source>
</evidence>
<evidence type="ECO:0000269" key="6">
    <source>
    </source>
</evidence>
<evidence type="ECO:0000269" key="7">
    <source>
    </source>
</evidence>
<evidence type="ECO:0000269" key="8">
    <source>
    </source>
</evidence>
<evidence type="ECO:0000269" key="9">
    <source>
    </source>
</evidence>
<evidence type="ECO:0000269" key="10">
    <source>
    </source>
</evidence>
<evidence type="ECO:0000269" key="11">
    <source>
    </source>
</evidence>
<evidence type="ECO:0000269" key="12">
    <source>
    </source>
</evidence>
<evidence type="ECO:0000269" key="13">
    <source>
    </source>
</evidence>
<evidence type="ECO:0000269" key="14">
    <source>
    </source>
</evidence>
<evidence type="ECO:0000269" key="15">
    <source>
    </source>
</evidence>
<evidence type="ECO:0000269" key="16">
    <source>
    </source>
</evidence>
<evidence type="ECO:0000269" key="17">
    <source>
    </source>
</evidence>
<evidence type="ECO:0000269" key="18">
    <source>
    </source>
</evidence>
<evidence type="ECO:0000269" key="19">
    <source>
    </source>
</evidence>
<evidence type="ECO:0000305" key="20"/>
<evidence type="ECO:0000312" key="21">
    <source>
        <dbReference type="HGNC" id="HGNC:5414"/>
    </source>
</evidence>
<organism>
    <name type="scientific">Homo sapiens</name>
    <name type="common">Human</name>
    <dbReference type="NCBI Taxonomy" id="9606"/>
    <lineage>
        <taxon>Eukaryota</taxon>
        <taxon>Metazoa</taxon>
        <taxon>Chordata</taxon>
        <taxon>Craniata</taxon>
        <taxon>Vertebrata</taxon>
        <taxon>Euteleostomi</taxon>
        <taxon>Mammalia</taxon>
        <taxon>Eutheria</taxon>
        <taxon>Euarchontoglires</taxon>
        <taxon>Primates</taxon>
        <taxon>Haplorrhini</taxon>
        <taxon>Catarrhini</taxon>
        <taxon>Hominidae</taxon>
        <taxon>Homo</taxon>
    </lineage>
</organism>
<accession>Q01628</accession>
<accession>Q53Y76</accession>
<accession>Q96HK8</accession>
<accession>Q96J15</accession>
<keyword id="KW-0051">Antiviral defense</keyword>
<keyword id="KW-1003">Cell membrane</keyword>
<keyword id="KW-0963">Cytoplasm</keyword>
<keyword id="KW-0967">Endosome</keyword>
<keyword id="KW-0391">Immunity</keyword>
<keyword id="KW-0399">Innate immunity</keyword>
<keyword id="KW-1017">Isopeptide bond</keyword>
<keyword id="KW-0449">Lipoprotein</keyword>
<keyword id="KW-0458">Lysosome</keyword>
<keyword id="KW-0472">Membrane</keyword>
<keyword id="KW-0564">Palmitate</keyword>
<keyword id="KW-0597">Phosphoprotein</keyword>
<keyword id="KW-1267">Proteomics identification</keyword>
<keyword id="KW-1185">Reference proteome</keyword>
<keyword id="KW-0735">Signal-anchor</keyword>
<keyword id="KW-0812">Transmembrane</keyword>
<keyword id="KW-1133">Transmembrane helix</keyword>
<keyword id="KW-0832">Ubl conjugation</keyword>
<dbReference type="EMBL" id="X57352">
    <property type="protein sequence ID" value="CAA40626.1"/>
    <property type="molecule type" value="mRNA"/>
</dbReference>
<dbReference type="EMBL" id="JQ610571">
    <property type="protein sequence ID" value="AFF60305.1"/>
    <property type="molecule type" value="Genomic_DNA"/>
</dbReference>
<dbReference type="EMBL" id="JQ610572">
    <property type="protein sequence ID" value="AFF60306.1"/>
    <property type="molecule type" value="Genomic_DNA"/>
</dbReference>
<dbReference type="EMBL" id="JQ610573">
    <property type="protein sequence ID" value="AFF60307.1"/>
    <property type="molecule type" value="Genomic_DNA"/>
</dbReference>
<dbReference type="EMBL" id="JQ610574">
    <property type="protein sequence ID" value="AFF60308.1"/>
    <property type="molecule type" value="Genomic_DNA"/>
</dbReference>
<dbReference type="EMBL" id="JQ610575">
    <property type="protein sequence ID" value="AFF60309.1"/>
    <property type="molecule type" value="Genomic_DNA"/>
</dbReference>
<dbReference type="EMBL" id="JQ610576">
    <property type="protein sequence ID" value="AFF60310.1"/>
    <property type="molecule type" value="Genomic_DNA"/>
</dbReference>
<dbReference type="EMBL" id="JQ610577">
    <property type="protein sequence ID" value="AFF60311.1"/>
    <property type="molecule type" value="Genomic_DNA"/>
</dbReference>
<dbReference type="EMBL" id="JQ610578">
    <property type="protein sequence ID" value="AFF60312.1"/>
    <property type="molecule type" value="Genomic_DNA"/>
</dbReference>
<dbReference type="EMBL" id="JQ610579">
    <property type="protein sequence ID" value="AFF60313.1"/>
    <property type="molecule type" value="Genomic_DNA"/>
</dbReference>
<dbReference type="EMBL" id="JQ610580">
    <property type="protein sequence ID" value="AFF60314.1"/>
    <property type="molecule type" value="Genomic_DNA"/>
</dbReference>
<dbReference type="EMBL" id="JQ610581">
    <property type="protein sequence ID" value="AFF60315.1"/>
    <property type="molecule type" value="Genomic_DNA"/>
</dbReference>
<dbReference type="EMBL" id="JQ610582">
    <property type="protein sequence ID" value="AFF60316.1"/>
    <property type="molecule type" value="Genomic_DNA"/>
</dbReference>
<dbReference type="EMBL" id="JQ610583">
    <property type="protein sequence ID" value="AFF60317.1"/>
    <property type="molecule type" value="Genomic_DNA"/>
</dbReference>
<dbReference type="EMBL" id="JQ610585">
    <property type="protein sequence ID" value="AFF60319.1"/>
    <property type="molecule type" value="Genomic_DNA"/>
</dbReference>
<dbReference type="EMBL" id="JQ610586">
    <property type="protein sequence ID" value="AFF60320.1"/>
    <property type="molecule type" value="Genomic_DNA"/>
</dbReference>
<dbReference type="EMBL" id="JQ610587">
    <property type="protein sequence ID" value="AFF60321.1"/>
    <property type="molecule type" value="Genomic_DNA"/>
</dbReference>
<dbReference type="EMBL" id="JQ610588">
    <property type="protein sequence ID" value="AFF60322.1"/>
    <property type="molecule type" value="Genomic_DNA"/>
</dbReference>
<dbReference type="EMBL" id="JQ610589">
    <property type="protein sequence ID" value="AFF60323.1"/>
    <property type="molecule type" value="Genomic_DNA"/>
</dbReference>
<dbReference type="EMBL" id="JQ610590">
    <property type="protein sequence ID" value="AFF60324.1"/>
    <property type="molecule type" value="Genomic_DNA"/>
</dbReference>
<dbReference type="EMBL" id="JQ610591">
    <property type="protein sequence ID" value="AFF60325.1"/>
    <property type="molecule type" value="Genomic_DNA"/>
</dbReference>
<dbReference type="EMBL" id="JQ610592">
    <property type="protein sequence ID" value="AFF60326.1"/>
    <property type="molecule type" value="Genomic_DNA"/>
</dbReference>
<dbReference type="EMBL" id="JQ610593">
    <property type="protein sequence ID" value="AFF60327.1"/>
    <property type="molecule type" value="Genomic_DNA"/>
</dbReference>
<dbReference type="EMBL" id="JQ610594">
    <property type="protein sequence ID" value="AFF60328.1"/>
    <property type="molecule type" value="Genomic_DNA"/>
</dbReference>
<dbReference type="EMBL" id="JQ610595">
    <property type="protein sequence ID" value="AFF60329.1"/>
    <property type="molecule type" value="Genomic_DNA"/>
</dbReference>
<dbReference type="EMBL" id="JQ610596">
    <property type="protein sequence ID" value="AFF60330.1"/>
    <property type="molecule type" value="Genomic_DNA"/>
</dbReference>
<dbReference type="EMBL" id="JQ610597">
    <property type="protein sequence ID" value="AFF60331.1"/>
    <property type="molecule type" value="Genomic_DNA"/>
</dbReference>
<dbReference type="EMBL" id="JQ610598">
    <property type="protein sequence ID" value="AFF60332.1"/>
    <property type="molecule type" value="Genomic_DNA"/>
</dbReference>
<dbReference type="EMBL" id="JQ610599">
    <property type="protein sequence ID" value="AFF60333.1"/>
    <property type="molecule type" value="Genomic_DNA"/>
</dbReference>
<dbReference type="EMBL" id="JQ610600">
    <property type="protein sequence ID" value="AFF60334.1"/>
    <property type="molecule type" value="Genomic_DNA"/>
</dbReference>
<dbReference type="EMBL" id="JQ610601">
    <property type="protein sequence ID" value="AFF60335.1"/>
    <property type="molecule type" value="Genomic_DNA"/>
</dbReference>
<dbReference type="EMBL" id="JQ610602">
    <property type="protein sequence ID" value="AFF60336.1"/>
    <property type="molecule type" value="Genomic_DNA"/>
</dbReference>
<dbReference type="EMBL" id="JQ610603">
    <property type="protein sequence ID" value="AFF60337.1"/>
    <property type="molecule type" value="Genomic_DNA"/>
</dbReference>
<dbReference type="EMBL" id="JQ610604">
    <property type="protein sequence ID" value="AFF60338.1"/>
    <property type="molecule type" value="Genomic_DNA"/>
</dbReference>
<dbReference type="EMBL" id="JQ610605">
    <property type="protein sequence ID" value="AFF60339.1"/>
    <property type="molecule type" value="Genomic_DNA"/>
</dbReference>
<dbReference type="EMBL" id="JQ610606">
    <property type="protein sequence ID" value="AFF60340.1"/>
    <property type="molecule type" value="Genomic_DNA"/>
</dbReference>
<dbReference type="EMBL" id="JQ610607">
    <property type="protein sequence ID" value="AFF60341.1"/>
    <property type="molecule type" value="Genomic_DNA"/>
</dbReference>
<dbReference type="EMBL" id="JQ610608">
    <property type="protein sequence ID" value="AFF60342.1"/>
    <property type="molecule type" value="Genomic_DNA"/>
</dbReference>
<dbReference type="EMBL" id="JQ610609">
    <property type="protein sequence ID" value="AFF60343.1"/>
    <property type="molecule type" value="Genomic_DNA"/>
</dbReference>
<dbReference type="EMBL" id="JQ610610">
    <property type="protein sequence ID" value="AFF60344.1"/>
    <property type="molecule type" value="Genomic_DNA"/>
</dbReference>
<dbReference type="EMBL" id="JQ610611">
    <property type="protein sequence ID" value="AFF60345.1"/>
    <property type="molecule type" value="Genomic_DNA"/>
</dbReference>
<dbReference type="EMBL" id="JQ610613">
    <property type="protein sequence ID" value="AFF60347.1"/>
    <property type="molecule type" value="Genomic_DNA"/>
</dbReference>
<dbReference type="EMBL" id="JQ610614">
    <property type="protein sequence ID" value="AFF60348.1"/>
    <property type="molecule type" value="Genomic_DNA"/>
</dbReference>
<dbReference type="EMBL" id="JQ610615">
    <property type="protein sequence ID" value="AFF60349.1"/>
    <property type="molecule type" value="Genomic_DNA"/>
</dbReference>
<dbReference type="EMBL" id="JQ610616">
    <property type="protein sequence ID" value="AFF60350.1"/>
    <property type="molecule type" value="Genomic_DNA"/>
</dbReference>
<dbReference type="EMBL" id="JQ610617">
    <property type="protein sequence ID" value="AFF60351.1"/>
    <property type="molecule type" value="Genomic_DNA"/>
</dbReference>
<dbReference type="EMBL" id="JQ610618">
    <property type="protein sequence ID" value="AFF60352.1"/>
    <property type="molecule type" value="Genomic_DNA"/>
</dbReference>
<dbReference type="EMBL" id="JQ610620">
    <property type="protein sequence ID" value="AFF60354.1"/>
    <property type="molecule type" value="Genomic_DNA"/>
</dbReference>
<dbReference type="EMBL" id="JQ610621">
    <property type="protein sequence ID" value="AFF60355.1"/>
    <property type="molecule type" value="Genomic_DNA"/>
</dbReference>
<dbReference type="EMBL" id="BT006892">
    <property type="protein sequence ID" value="AAP35538.1"/>
    <property type="molecule type" value="mRNA"/>
</dbReference>
<dbReference type="EMBL" id="AK292173">
    <property type="protein sequence ID" value="BAF84862.1"/>
    <property type="molecule type" value="mRNA"/>
</dbReference>
<dbReference type="EMBL" id="AC136475">
    <property type="status" value="NOT_ANNOTATED_CDS"/>
    <property type="molecule type" value="Genomic_DNA"/>
</dbReference>
<dbReference type="EMBL" id="CH891444">
    <property type="protein sequence ID" value="EAW50866.1"/>
    <property type="molecule type" value="Genomic_DNA"/>
</dbReference>
<dbReference type="EMBL" id="BC006794">
    <property type="protein sequence ID" value="AAH06794.1"/>
    <property type="molecule type" value="mRNA"/>
</dbReference>
<dbReference type="EMBL" id="BC008417">
    <property type="protein sequence ID" value="AAH08417.1"/>
    <property type="molecule type" value="mRNA"/>
</dbReference>
<dbReference type="EMBL" id="BC022439">
    <property type="protein sequence ID" value="AAH22439.1"/>
    <property type="molecule type" value="mRNA"/>
</dbReference>
<dbReference type="EMBL" id="BC070243">
    <property type="protein sequence ID" value="AAH70243.1"/>
    <property type="molecule type" value="mRNA"/>
</dbReference>
<dbReference type="CCDS" id="CCDS41585.1"/>
<dbReference type="PIR" id="S17182">
    <property type="entry name" value="S17182"/>
</dbReference>
<dbReference type="RefSeq" id="NP_066362.2">
    <property type="nucleotide sequence ID" value="NM_021034.3"/>
</dbReference>
<dbReference type="BioGRID" id="115681">
    <property type="interactions" value="561"/>
</dbReference>
<dbReference type="FunCoup" id="Q01628">
    <property type="interactions" value="253"/>
</dbReference>
<dbReference type="IntAct" id="Q01628">
    <property type="interactions" value="88"/>
</dbReference>
<dbReference type="MINT" id="Q01628"/>
<dbReference type="STRING" id="9606.ENSP00000382707"/>
<dbReference type="TCDB" id="8.A.58.1.3">
    <property type="family name" value="the dispanin (dispanin) family"/>
</dbReference>
<dbReference type="GlyGen" id="Q01628">
    <property type="glycosylation" value="1 site, 1 O-linked glycan (1 site)"/>
</dbReference>
<dbReference type="iPTMnet" id="Q01628"/>
<dbReference type="PhosphoSitePlus" id="Q01628"/>
<dbReference type="SwissPalm" id="Q01628"/>
<dbReference type="BioMuta" id="IFITM3"/>
<dbReference type="DMDM" id="20178301"/>
<dbReference type="jPOST" id="Q01628"/>
<dbReference type="MassIVE" id="Q01628"/>
<dbReference type="PaxDb" id="9606-ENSP00000382707"/>
<dbReference type="PeptideAtlas" id="Q01628"/>
<dbReference type="ProteomicsDB" id="57973"/>
<dbReference type="Pumba" id="Q01628"/>
<dbReference type="TopDownProteomics" id="Q01628"/>
<dbReference type="Antibodypedia" id="1023">
    <property type="antibodies" value="370 antibodies from 37 providers"/>
</dbReference>
<dbReference type="DNASU" id="10410"/>
<dbReference type="Ensembl" id="ENST00000399808.5">
    <property type="protein sequence ID" value="ENSP00000382707.4"/>
    <property type="gene ID" value="ENSG00000142089.17"/>
</dbReference>
<dbReference type="GeneID" id="10410"/>
<dbReference type="KEGG" id="hsa:10410"/>
<dbReference type="MANE-Select" id="ENST00000399808.5">
    <property type="protein sequence ID" value="ENSP00000382707.4"/>
    <property type="RefSeq nucleotide sequence ID" value="NM_021034.3"/>
    <property type="RefSeq protein sequence ID" value="NP_066362.2"/>
</dbReference>
<dbReference type="UCSC" id="uc001lpa.3">
    <property type="organism name" value="human"/>
</dbReference>
<dbReference type="AGR" id="HGNC:5414"/>
<dbReference type="CTD" id="10410"/>
<dbReference type="DisGeNET" id="10410"/>
<dbReference type="GeneCards" id="IFITM3"/>
<dbReference type="HGNC" id="HGNC:5414">
    <property type="gene designation" value="IFITM3"/>
</dbReference>
<dbReference type="HPA" id="ENSG00000142089">
    <property type="expression patterns" value="Low tissue specificity"/>
</dbReference>
<dbReference type="MalaCards" id="IFITM3"/>
<dbReference type="MIM" id="605579">
    <property type="type" value="gene"/>
</dbReference>
<dbReference type="MIM" id="614680">
    <property type="type" value="phenotype"/>
</dbReference>
<dbReference type="neXtProt" id="NX_Q01628"/>
<dbReference type="OpenTargets" id="ENSG00000142089"/>
<dbReference type="PharmGKB" id="PA29655"/>
<dbReference type="VEuPathDB" id="HostDB:ENSG00000142089"/>
<dbReference type="eggNOG" id="ENOG502S9XK">
    <property type="taxonomic scope" value="Eukaryota"/>
</dbReference>
<dbReference type="GeneTree" id="ENSGT00950000182857"/>
<dbReference type="InParanoid" id="Q01628"/>
<dbReference type="OMA" id="HKECHIQ"/>
<dbReference type="OrthoDB" id="17119at9604"/>
<dbReference type="PAN-GO" id="Q01628">
    <property type="GO annotations" value="8 GO annotations based on evolutionary models"/>
</dbReference>
<dbReference type="PhylomeDB" id="Q01628"/>
<dbReference type="TreeFam" id="TF334894"/>
<dbReference type="PathwayCommons" id="Q01628"/>
<dbReference type="Reactome" id="R-HSA-909733">
    <property type="pathway name" value="Interferon alpha/beta signaling"/>
</dbReference>
<dbReference type="SignaLink" id="Q01628"/>
<dbReference type="SIGNOR" id="Q01628"/>
<dbReference type="BioGRID-ORCS" id="10410">
    <property type="hits" value="660 hits in 1125 CRISPR screens"/>
</dbReference>
<dbReference type="ChiTaRS" id="IFITM3">
    <property type="organism name" value="human"/>
</dbReference>
<dbReference type="GeneWiki" id="IFITM3"/>
<dbReference type="GenomeRNAi" id="10410"/>
<dbReference type="Pharos" id="Q01628">
    <property type="development level" value="Tbio"/>
</dbReference>
<dbReference type="PRO" id="PR:Q01628"/>
<dbReference type="Proteomes" id="UP000005640">
    <property type="component" value="Chromosome 11"/>
</dbReference>
<dbReference type="RNAct" id="Q01628">
    <property type="molecule type" value="protein"/>
</dbReference>
<dbReference type="Bgee" id="ENSG00000142089">
    <property type="expression patterns" value="Expressed in left uterine tube and 206 other cell types or tissues"/>
</dbReference>
<dbReference type="ExpressionAtlas" id="Q01628">
    <property type="expression patterns" value="baseline and differential"/>
</dbReference>
<dbReference type="GO" id="GO:0031901">
    <property type="term" value="C:early endosome membrane"/>
    <property type="evidence" value="ECO:0000314"/>
    <property type="project" value="UniProtKB"/>
</dbReference>
<dbReference type="GO" id="GO:0031902">
    <property type="term" value="C:late endosome membrane"/>
    <property type="evidence" value="ECO:0007669"/>
    <property type="project" value="UniProtKB-SubCell"/>
</dbReference>
<dbReference type="GO" id="GO:0005765">
    <property type="term" value="C:lysosomal membrane"/>
    <property type="evidence" value="ECO:0000314"/>
    <property type="project" value="UniProtKB"/>
</dbReference>
<dbReference type="GO" id="GO:0048471">
    <property type="term" value="C:perinuclear region of cytoplasm"/>
    <property type="evidence" value="ECO:0007669"/>
    <property type="project" value="UniProtKB-SubCell"/>
</dbReference>
<dbReference type="GO" id="GO:0005886">
    <property type="term" value="C:plasma membrane"/>
    <property type="evidence" value="ECO:0000314"/>
    <property type="project" value="UniProtKB"/>
</dbReference>
<dbReference type="GO" id="GO:0032991">
    <property type="term" value="C:protein-containing complex"/>
    <property type="evidence" value="ECO:0000314"/>
    <property type="project" value="MGI"/>
</dbReference>
<dbReference type="GO" id="GO:0051607">
    <property type="term" value="P:defense response to virus"/>
    <property type="evidence" value="ECO:0000314"/>
    <property type="project" value="UniProtKB"/>
</dbReference>
<dbReference type="GO" id="GO:0046597">
    <property type="term" value="P:host-mediated suppression of symbiont invasion"/>
    <property type="evidence" value="ECO:0000314"/>
    <property type="project" value="UniProtKB"/>
</dbReference>
<dbReference type="GO" id="GO:0006955">
    <property type="term" value="P:immune response"/>
    <property type="evidence" value="ECO:0000304"/>
    <property type="project" value="ProtInc"/>
</dbReference>
<dbReference type="GO" id="GO:0045071">
    <property type="term" value="P:negative regulation of viral genome replication"/>
    <property type="evidence" value="ECO:0000314"/>
    <property type="project" value="UniProtKB"/>
</dbReference>
<dbReference type="GO" id="GO:0032897">
    <property type="term" value="P:negative regulation of viral transcription"/>
    <property type="evidence" value="ECO:0000314"/>
    <property type="project" value="UniProtKB"/>
</dbReference>
<dbReference type="GO" id="GO:0035455">
    <property type="term" value="P:response to interferon-alpha"/>
    <property type="evidence" value="ECO:0000314"/>
    <property type="project" value="UniProtKB"/>
</dbReference>
<dbReference type="GO" id="GO:0035456">
    <property type="term" value="P:response to interferon-beta"/>
    <property type="evidence" value="ECO:0000314"/>
    <property type="project" value="UniProtKB"/>
</dbReference>
<dbReference type="GO" id="GO:0034341">
    <property type="term" value="P:response to type II interferon"/>
    <property type="evidence" value="ECO:0000314"/>
    <property type="project" value="UniProtKB"/>
</dbReference>
<dbReference type="GO" id="GO:0009615">
    <property type="term" value="P:response to virus"/>
    <property type="evidence" value="ECO:0000314"/>
    <property type="project" value="UniProtKB"/>
</dbReference>
<dbReference type="GO" id="GO:0060337">
    <property type="term" value="P:type I interferon-mediated signaling pathway"/>
    <property type="evidence" value="ECO:0000318"/>
    <property type="project" value="GO_Central"/>
</dbReference>
<dbReference type="InterPro" id="IPR007593">
    <property type="entry name" value="CD225/Dispanin_fam"/>
</dbReference>
<dbReference type="InterPro" id="IPR051517">
    <property type="entry name" value="IFITM_antiviral_protein"/>
</dbReference>
<dbReference type="PANTHER" id="PTHR13999">
    <property type="entry name" value="INTERFERON INDUCIBLE TRANSMEMBRANE PROTEIN"/>
    <property type="match status" value="1"/>
</dbReference>
<dbReference type="PANTHER" id="PTHR13999:SF4">
    <property type="entry name" value="INTERFERON-INDUCED TRANSMEMBRANE PROTEIN 3"/>
    <property type="match status" value="1"/>
</dbReference>
<dbReference type="Pfam" id="PF04505">
    <property type="entry name" value="CD225"/>
    <property type="match status" value="1"/>
</dbReference>